<keyword id="KW-0325">Glycoprotein</keyword>
<keyword id="KW-0378">Hydrolase</keyword>
<keyword id="KW-0479">Metal-binding</keyword>
<keyword id="KW-0482">Metalloprotease</keyword>
<keyword id="KW-0645">Protease</keyword>
<keyword id="KW-0964">Secreted</keyword>
<keyword id="KW-0732">Signal</keyword>
<keyword id="KW-0843">Virulence</keyword>
<keyword id="KW-0862">Zinc</keyword>
<keyword id="KW-0865">Zymogen</keyword>
<organism>
    <name type="scientific">Trichophyton verrucosum (strain HKI 0517)</name>
    <dbReference type="NCBI Taxonomy" id="663202"/>
    <lineage>
        <taxon>Eukaryota</taxon>
        <taxon>Fungi</taxon>
        <taxon>Dikarya</taxon>
        <taxon>Ascomycota</taxon>
        <taxon>Pezizomycotina</taxon>
        <taxon>Eurotiomycetes</taxon>
        <taxon>Eurotiomycetidae</taxon>
        <taxon>Onygenales</taxon>
        <taxon>Arthrodermataceae</taxon>
        <taxon>Trichophyton</taxon>
    </lineage>
</organism>
<gene>
    <name type="primary">MEP1</name>
    <name type="ORF">TRV_02160</name>
</gene>
<sequence length="635" mass="70069">MHGLLLAAGLLSLPLHVLAHPQPSTSTSLAGRAGAVDLNEFRIAHRSSYTSHDEMKKLPSIASFRQGTYLEVATELVKQTIPNMEFRLVDDHYVGDSGIGHVRFRQTMHGIDIDNSDFNVNVGKDGKVLSHGNSFYTGPAPSSNPMVKRDFIDPMQALHGVRKALNLPIKADGAHVEDMSEHKVMFKGTSGALSDPTAKLCYMAKEDGSLALTWRVETDIGDNWLLSYMDAKESSKVHNVVDYVAHATFQVYKWGLADPTEGKREILTNPWNLKTSPLTWLSDGQNNFTATRGNNAIAQYNPDGGNDYENNYRPSPKNLKFEYPYSPDMNPPKTYIDASVTELFYTSNVCHDLYYMLGFNEKAGNFQVNNRGQGGKGNDFVILNAQDGSGTNNANFATPPDGQPGRMRAYIWTRANPPRDASFEAGTIIHEYTHGLSNRLCGGPANSRCLNAIESGGMGEGWGDFYATAVRLKPNDTRKTNYVKGGWVNNSPKGVRMYPYSTDMNVNPLVYTSNNKLNEVHAIGTVWCTMLYEVLWNLIDKHGKNDGPVPIFENGVPNDGKYLAMKIVMDGMAIQPCNPNFVQARDAILDADMNLTKGANKCEIWKGFAKRGLGVGAKFDPKNRTGSTQVPNECK</sequence>
<accession>D4D4Z2</accession>
<feature type="signal peptide" evidence="2">
    <location>
        <begin position="1"/>
        <end position="19"/>
    </location>
</feature>
<feature type="propeptide" id="PRO_0000397724" evidence="1">
    <location>
        <begin position="20"/>
        <end position="246"/>
    </location>
</feature>
<feature type="chain" id="PRO_0000397725" description="Probable extracellular metalloproteinase 1">
    <location>
        <begin position="247"/>
        <end position="635"/>
    </location>
</feature>
<feature type="active site" evidence="3">
    <location>
        <position position="431"/>
    </location>
</feature>
<feature type="binding site" evidence="3">
    <location>
        <position position="430"/>
    </location>
    <ligand>
        <name>Zn(2+)</name>
        <dbReference type="ChEBI" id="CHEBI:29105"/>
        <note>catalytic</note>
    </ligand>
</feature>
<feature type="binding site" evidence="3">
    <location>
        <position position="434"/>
    </location>
    <ligand>
        <name>Zn(2+)</name>
        <dbReference type="ChEBI" id="CHEBI:29105"/>
        <note>catalytic</note>
    </ligand>
</feature>
<feature type="glycosylation site" description="N-linked (GlcNAc...) asparagine" evidence="2">
    <location>
        <position position="287"/>
    </location>
</feature>
<feature type="glycosylation site" description="N-linked (GlcNAc...) asparagine" evidence="2">
    <location>
        <position position="475"/>
    </location>
</feature>
<feature type="glycosylation site" description="N-linked (GlcNAc...) asparagine" evidence="2">
    <location>
        <position position="594"/>
    </location>
</feature>
<feature type="glycosylation site" description="N-linked (GlcNAc...) asparagine" evidence="2">
    <location>
        <position position="623"/>
    </location>
</feature>
<protein>
    <recommendedName>
        <fullName>Probable extracellular metalloproteinase 1</fullName>
        <ecNumber>3.4.24.-</ecNumber>
    </recommendedName>
    <alternativeName>
        <fullName>Fungalysin MEP1</fullName>
    </alternativeName>
</protein>
<name>MEP1_TRIVH</name>
<proteinExistence type="inferred from homology"/>
<reference key="1">
    <citation type="journal article" date="2011" name="Genome Biol.">
        <title>Comparative and functional genomics provide insights into the pathogenicity of dermatophytic fungi.</title>
        <authorList>
            <person name="Burmester A."/>
            <person name="Shelest E."/>
            <person name="Gloeckner G."/>
            <person name="Heddergott C."/>
            <person name="Schindler S."/>
            <person name="Staib P."/>
            <person name="Heidel A."/>
            <person name="Felder M."/>
            <person name="Petzold A."/>
            <person name="Szafranski K."/>
            <person name="Feuermann M."/>
            <person name="Pedruzzi I."/>
            <person name="Priebe S."/>
            <person name="Groth M."/>
            <person name="Winkler R."/>
            <person name="Li W."/>
            <person name="Kniemeyer O."/>
            <person name="Schroeckh V."/>
            <person name="Hertweck C."/>
            <person name="Hube B."/>
            <person name="White T.C."/>
            <person name="Platzer M."/>
            <person name="Guthke R."/>
            <person name="Heitman J."/>
            <person name="Woestemeyer J."/>
            <person name="Zipfel P.F."/>
            <person name="Monod M."/>
            <person name="Brakhage A.A."/>
        </authorList>
    </citation>
    <scope>NUCLEOTIDE SEQUENCE [LARGE SCALE GENOMIC DNA]</scope>
    <source>
        <strain>HKI 0517</strain>
    </source>
</reference>
<evidence type="ECO:0000250" key="1"/>
<evidence type="ECO:0000255" key="2"/>
<evidence type="ECO:0000255" key="3">
    <source>
        <dbReference type="PROSITE-ProRule" id="PRU10095"/>
    </source>
</evidence>
<evidence type="ECO:0000305" key="4"/>
<dbReference type="EC" id="3.4.24.-"/>
<dbReference type="EMBL" id="ACYE01000116">
    <property type="protein sequence ID" value="EFE43079.1"/>
    <property type="status" value="ALT_SEQ"/>
    <property type="molecule type" value="Genomic_DNA"/>
</dbReference>
<dbReference type="RefSeq" id="XP_003023697.1">
    <property type="nucleotide sequence ID" value="XM_003023651.1"/>
</dbReference>
<dbReference type="SMR" id="D4D4Z2"/>
<dbReference type="MEROPS" id="M36.001"/>
<dbReference type="GlyCosmos" id="D4D4Z2">
    <property type="glycosylation" value="4 sites, No reported glycans"/>
</dbReference>
<dbReference type="GeneID" id="9582244"/>
<dbReference type="KEGG" id="tve:TRV_02160"/>
<dbReference type="HOGENOM" id="CLU_012703_3_0_1"/>
<dbReference type="OrthoDB" id="260at34384"/>
<dbReference type="Proteomes" id="UP000008383">
    <property type="component" value="Unassembled WGS sequence"/>
</dbReference>
<dbReference type="GO" id="GO:0005576">
    <property type="term" value="C:extracellular region"/>
    <property type="evidence" value="ECO:0007669"/>
    <property type="project" value="UniProtKB-SubCell"/>
</dbReference>
<dbReference type="GO" id="GO:0004222">
    <property type="term" value="F:metalloendopeptidase activity"/>
    <property type="evidence" value="ECO:0007669"/>
    <property type="project" value="InterPro"/>
</dbReference>
<dbReference type="GO" id="GO:0008270">
    <property type="term" value="F:zinc ion binding"/>
    <property type="evidence" value="ECO:0007669"/>
    <property type="project" value="InterPro"/>
</dbReference>
<dbReference type="GO" id="GO:0006508">
    <property type="term" value="P:proteolysis"/>
    <property type="evidence" value="ECO:0007669"/>
    <property type="project" value="UniProtKB-KW"/>
</dbReference>
<dbReference type="CDD" id="cd09596">
    <property type="entry name" value="M36"/>
    <property type="match status" value="1"/>
</dbReference>
<dbReference type="Gene3D" id="3.10.170.10">
    <property type="match status" value="1"/>
</dbReference>
<dbReference type="Gene3D" id="1.10.390.10">
    <property type="entry name" value="Neutral Protease Domain 2"/>
    <property type="match status" value="1"/>
</dbReference>
<dbReference type="InterPro" id="IPR011096">
    <property type="entry name" value="FTP_domain"/>
</dbReference>
<dbReference type="InterPro" id="IPR050371">
    <property type="entry name" value="Fungal_virulence_M36"/>
</dbReference>
<dbReference type="InterPro" id="IPR001842">
    <property type="entry name" value="Peptidase_M36"/>
</dbReference>
<dbReference type="InterPro" id="IPR027268">
    <property type="entry name" value="Peptidase_M4/M1_CTD_sf"/>
</dbReference>
<dbReference type="PANTHER" id="PTHR33478">
    <property type="entry name" value="EXTRACELLULAR METALLOPROTEINASE MEP"/>
    <property type="match status" value="1"/>
</dbReference>
<dbReference type="PANTHER" id="PTHR33478:SF1">
    <property type="entry name" value="EXTRACELLULAR METALLOPROTEINASE MEP"/>
    <property type="match status" value="1"/>
</dbReference>
<dbReference type="Pfam" id="PF07504">
    <property type="entry name" value="FTP"/>
    <property type="match status" value="1"/>
</dbReference>
<dbReference type="Pfam" id="PF02128">
    <property type="entry name" value="Peptidase_M36"/>
    <property type="match status" value="1"/>
</dbReference>
<dbReference type="PRINTS" id="PR00999">
    <property type="entry name" value="FUNGALYSIN"/>
</dbReference>
<dbReference type="SUPFAM" id="SSF55486">
    <property type="entry name" value="Metalloproteases ('zincins'), catalytic domain"/>
    <property type="match status" value="1"/>
</dbReference>
<dbReference type="PROSITE" id="PS00142">
    <property type="entry name" value="ZINC_PROTEASE"/>
    <property type="match status" value="1"/>
</dbReference>
<comment type="function">
    <text evidence="1">Secreted metalloproteinase probably acting as a virulence factor.</text>
</comment>
<comment type="cofactor">
    <cofactor evidence="1">
        <name>Zn(2+)</name>
        <dbReference type="ChEBI" id="CHEBI:29105"/>
    </cofactor>
    <text evidence="1">Binds 1 zinc ion per subunit.</text>
</comment>
<comment type="subcellular location">
    <subcellularLocation>
        <location evidence="1">Secreted</location>
    </subcellularLocation>
</comment>
<comment type="similarity">
    <text evidence="4">Belongs to the peptidase M36 family.</text>
</comment>
<comment type="sequence caution" evidence="4">
    <conflict type="erroneous gene model prediction">
        <sequence resource="EMBL-CDS" id="EFE43079"/>
    </conflict>
</comment>